<accession>Q2J2G6</accession>
<dbReference type="EC" id="2.1.3.15" evidence="1"/>
<dbReference type="EMBL" id="CP000250">
    <property type="protein sequence ID" value="ABD05344.1"/>
    <property type="molecule type" value="Genomic_DNA"/>
</dbReference>
<dbReference type="RefSeq" id="WP_011439534.1">
    <property type="nucleotide sequence ID" value="NC_007778.1"/>
</dbReference>
<dbReference type="SMR" id="Q2J2G6"/>
<dbReference type="STRING" id="316058.RPB_0633"/>
<dbReference type="KEGG" id="rpb:RPB_0633"/>
<dbReference type="eggNOG" id="COG0777">
    <property type="taxonomic scope" value="Bacteria"/>
</dbReference>
<dbReference type="HOGENOM" id="CLU_015486_1_0_5"/>
<dbReference type="OrthoDB" id="9772975at2"/>
<dbReference type="UniPathway" id="UPA00655">
    <property type="reaction ID" value="UER00711"/>
</dbReference>
<dbReference type="Proteomes" id="UP000008809">
    <property type="component" value="Chromosome"/>
</dbReference>
<dbReference type="GO" id="GO:0009329">
    <property type="term" value="C:acetate CoA-transferase complex"/>
    <property type="evidence" value="ECO:0007669"/>
    <property type="project" value="TreeGrafter"/>
</dbReference>
<dbReference type="GO" id="GO:0003989">
    <property type="term" value="F:acetyl-CoA carboxylase activity"/>
    <property type="evidence" value="ECO:0007669"/>
    <property type="project" value="InterPro"/>
</dbReference>
<dbReference type="GO" id="GO:0005524">
    <property type="term" value="F:ATP binding"/>
    <property type="evidence" value="ECO:0007669"/>
    <property type="project" value="UniProtKB-KW"/>
</dbReference>
<dbReference type="GO" id="GO:0016743">
    <property type="term" value="F:carboxyl- or carbamoyltransferase activity"/>
    <property type="evidence" value="ECO:0007669"/>
    <property type="project" value="UniProtKB-UniRule"/>
</dbReference>
<dbReference type="GO" id="GO:0006633">
    <property type="term" value="P:fatty acid biosynthetic process"/>
    <property type="evidence" value="ECO:0007669"/>
    <property type="project" value="UniProtKB-KW"/>
</dbReference>
<dbReference type="GO" id="GO:2001295">
    <property type="term" value="P:malonyl-CoA biosynthetic process"/>
    <property type="evidence" value="ECO:0007669"/>
    <property type="project" value="UniProtKB-UniRule"/>
</dbReference>
<dbReference type="Gene3D" id="3.90.226.10">
    <property type="entry name" value="2-enoyl-CoA Hydratase, Chain A, domain 1"/>
    <property type="match status" value="1"/>
</dbReference>
<dbReference type="HAMAP" id="MF_01395">
    <property type="entry name" value="AcetylCoA_CT_beta"/>
    <property type="match status" value="1"/>
</dbReference>
<dbReference type="InterPro" id="IPR034733">
    <property type="entry name" value="AcCoA_carboxyl_beta"/>
</dbReference>
<dbReference type="InterPro" id="IPR000438">
    <property type="entry name" value="Acetyl_CoA_COase_Trfase_b_su"/>
</dbReference>
<dbReference type="InterPro" id="IPR029045">
    <property type="entry name" value="ClpP/crotonase-like_dom_sf"/>
</dbReference>
<dbReference type="InterPro" id="IPR011762">
    <property type="entry name" value="COA_CT_N"/>
</dbReference>
<dbReference type="NCBIfam" id="TIGR00515">
    <property type="entry name" value="accD"/>
    <property type="match status" value="1"/>
</dbReference>
<dbReference type="PANTHER" id="PTHR42995">
    <property type="entry name" value="ACETYL-COENZYME A CARBOXYLASE CARBOXYL TRANSFERASE SUBUNIT BETA, CHLOROPLASTIC"/>
    <property type="match status" value="1"/>
</dbReference>
<dbReference type="PANTHER" id="PTHR42995:SF5">
    <property type="entry name" value="ACETYL-COENZYME A CARBOXYLASE CARBOXYL TRANSFERASE SUBUNIT BETA, CHLOROPLASTIC"/>
    <property type="match status" value="1"/>
</dbReference>
<dbReference type="Pfam" id="PF01039">
    <property type="entry name" value="Carboxyl_trans"/>
    <property type="match status" value="1"/>
</dbReference>
<dbReference type="PRINTS" id="PR01070">
    <property type="entry name" value="ACCCTRFRASEB"/>
</dbReference>
<dbReference type="SUPFAM" id="SSF52096">
    <property type="entry name" value="ClpP/crotonase"/>
    <property type="match status" value="1"/>
</dbReference>
<dbReference type="PROSITE" id="PS50980">
    <property type="entry name" value="COA_CT_NTER"/>
    <property type="match status" value="1"/>
</dbReference>
<comment type="function">
    <text evidence="1">Component of the acetyl coenzyme A carboxylase (ACC) complex. Biotin carboxylase (BC) catalyzes the carboxylation of biotin on its carrier protein (BCCP) and then the CO(2) group is transferred by the transcarboxylase to acetyl-CoA to form malonyl-CoA.</text>
</comment>
<comment type="catalytic activity">
    <reaction evidence="1">
        <text>N(6)-carboxybiotinyl-L-lysyl-[protein] + acetyl-CoA = N(6)-biotinyl-L-lysyl-[protein] + malonyl-CoA</text>
        <dbReference type="Rhea" id="RHEA:54728"/>
        <dbReference type="Rhea" id="RHEA-COMP:10505"/>
        <dbReference type="Rhea" id="RHEA-COMP:10506"/>
        <dbReference type="ChEBI" id="CHEBI:57288"/>
        <dbReference type="ChEBI" id="CHEBI:57384"/>
        <dbReference type="ChEBI" id="CHEBI:83144"/>
        <dbReference type="ChEBI" id="CHEBI:83145"/>
        <dbReference type="EC" id="2.1.3.15"/>
    </reaction>
</comment>
<comment type="pathway">
    <text evidence="1">Lipid metabolism; malonyl-CoA biosynthesis; malonyl-CoA from acetyl-CoA: step 1/1.</text>
</comment>
<comment type="subunit">
    <text evidence="1">Acetyl-CoA carboxylase is a heterohexamer composed of biotin carboxyl carrier protein (AccB), biotin carboxylase (AccC) and two subunits each of ACCase subunit alpha (AccA) and ACCase subunit beta (AccD).</text>
</comment>
<comment type="subcellular location">
    <subcellularLocation>
        <location evidence="1">Cytoplasm</location>
    </subcellularLocation>
</comment>
<comment type="similarity">
    <text evidence="1">Belongs to the AccD/PCCB family.</text>
</comment>
<feature type="chain" id="PRO_0000389837" description="Acetyl-coenzyme A carboxylase carboxyl transferase subunit beta">
    <location>
        <begin position="1"/>
        <end position="322"/>
    </location>
</feature>
<feature type="domain" description="CoA carboxyltransferase N-terminal" evidence="2">
    <location>
        <begin position="24"/>
        <end position="293"/>
    </location>
</feature>
<keyword id="KW-0067">ATP-binding</keyword>
<keyword id="KW-0963">Cytoplasm</keyword>
<keyword id="KW-0275">Fatty acid biosynthesis</keyword>
<keyword id="KW-0276">Fatty acid metabolism</keyword>
<keyword id="KW-0444">Lipid biosynthesis</keyword>
<keyword id="KW-0443">Lipid metabolism</keyword>
<keyword id="KW-0547">Nucleotide-binding</keyword>
<keyword id="KW-1185">Reference proteome</keyword>
<keyword id="KW-0808">Transferase</keyword>
<proteinExistence type="inferred from homology"/>
<evidence type="ECO:0000255" key="1">
    <source>
        <dbReference type="HAMAP-Rule" id="MF_01395"/>
    </source>
</evidence>
<evidence type="ECO:0000255" key="2">
    <source>
        <dbReference type="PROSITE-ProRule" id="PRU01136"/>
    </source>
</evidence>
<name>ACCD_RHOP2</name>
<organism>
    <name type="scientific">Rhodopseudomonas palustris (strain HaA2)</name>
    <dbReference type="NCBI Taxonomy" id="316058"/>
    <lineage>
        <taxon>Bacteria</taxon>
        <taxon>Pseudomonadati</taxon>
        <taxon>Pseudomonadota</taxon>
        <taxon>Alphaproteobacteria</taxon>
        <taxon>Hyphomicrobiales</taxon>
        <taxon>Nitrobacteraceae</taxon>
        <taxon>Rhodopseudomonas</taxon>
    </lineage>
</organism>
<sequence>MNWLTNVVRPKIRNILRRETPENLWIKCPDTGQLVFYKDVEQNQFVIPGSNYHMRMGATARLRSVFDNETWYDVALPEVTADPLKFRDERKYVDRIKDARAKTGAHDAVKVGYGKLEGLGVVAAVQDFDFMGGSLGMAAGEAIIRGLELAVEKHAPFIMFAASGGARMQEGILSLMQMPRTTVAVQLLREAGLPYIVVLTNPTTGGVTASYAMLGDIQLAEPGALIGFAGARVIEQTIREKLPDGFQRAEYLRDHGMVDMVVHRHELRPTLARLCRILTKTPLPAVEEPAVVDDDAQDIEAVATEIVATPPEPAPPPAAPQA</sequence>
<protein>
    <recommendedName>
        <fullName evidence="1">Acetyl-coenzyme A carboxylase carboxyl transferase subunit beta</fullName>
        <shortName evidence="1">ACCase subunit beta</shortName>
        <shortName evidence="1">Acetyl-CoA carboxylase carboxyltransferase subunit beta</shortName>
        <ecNumber evidence="1">2.1.3.15</ecNumber>
    </recommendedName>
</protein>
<gene>
    <name evidence="1" type="primary">accD</name>
    <name type="ordered locus">RPB_0633</name>
</gene>
<reference key="1">
    <citation type="submission" date="2006-01" db="EMBL/GenBank/DDBJ databases">
        <title>Complete sequence of Rhodopseudomonas palustris HaA2.</title>
        <authorList>
            <consortium name="US DOE Joint Genome Institute"/>
            <person name="Copeland A."/>
            <person name="Lucas S."/>
            <person name="Lapidus A."/>
            <person name="Barry K."/>
            <person name="Detter J.C."/>
            <person name="Glavina T."/>
            <person name="Hammon N."/>
            <person name="Israni S."/>
            <person name="Pitluck S."/>
            <person name="Chain P."/>
            <person name="Malfatti S."/>
            <person name="Shin M."/>
            <person name="Vergez L."/>
            <person name="Schmutz J."/>
            <person name="Larimer F."/>
            <person name="Land M."/>
            <person name="Hauser L."/>
            <person name="Pelletier D.A."/>
            <person name="Kyrpides N."/>
            <person name="Anderson I."/>
            <person name="Oda Y."/>
            <person name="Harwood C.S."/>
            <person name="Richardson P."/>
        </authorList>
    </citation>
    <scope>NUCLEOTIDE SEQUENCE [LARGE SCALE GENOMIC DNA]</scope>
    <source>
        <strain>HaA2</strain>
    </source>
</reference>